<reference key="1">
    <citation type="journal article" date="2005" name="BMC Genomics">
        <title>Bacterial genome adaptation to niches: divergence of the potential virulence genes in three Burkholderia species of different survival strategies.</title>
        <authorList>
            <person name="Kim H.S."/>
            <person name="Schell M.A."/>
            <person name="Yu Y."/>
            <person name="Ulrich R.L."/>
            <person name="Sarria S.H."/>
            <person name="Nierman W.C."/>
            <person name="DeShazer D."/>
        </authorList>
    </citation>
    <scope>NUCLEOTIDE SEQUENCE [LARGE SCALE GENOMIC DNA]</scope>
    <source>
        <strain>ATCC 700388 / DSM 13276 / CCUG 48851 / CIP 106301 / E264</strain>
    </source>
</reference>
<organism>
    <name type="scientific">Burkholderia thailandensis (strain ATCC 700388 / DSM 13276 / CCUG 48851 / CIP 106301 / E264)</name>
    <dbReference type="NCBI Taxonomy" id="271848"/>
    <lineage>
        <taxon>Bacteria</taxon>
        <taxon>Pseudomonadati</taxon>
        <taxon>Pseudomonadota</taxon>
        <taxon>Betaproteobacteria</taxon>
        <taxon>Burkholderiales</taxon>
        <taxon>Burkholderiaceae</taxon>
        <taxon>Burkholderia</taxon>
        <taxon>pseudomallei group</taxon>
    </lineage>
</organism>
<sequence length="704" mass="77923">MPRKTPIERYRNIGISAHIDAGKTTTTERILFYTGVSHKIGEVHDGAATMDWMEQEQERGITITSAATTAFWKGMAGNYPEHRINIIDTPGHVDFTIEVERSMRVLDGACMVYDSVGGVQPQSETVWRQANKYKVPRIAFVNKMDRVGADFFRVQRQIGERLKGVAVPIQIPIGAEEHFQGVVDLVKMKAIVWDDESQGVKFTYEDIPANLVEIAHEWREKMVEAAAEASEELLEKYLTDHHSLTEDEIKAALRRRTIANEIVPMLCGSAFKNKGVQAMLDAVIDYLPSPADVPAILGHDLHDNEAERHPSDDEPFSALAFKIMTDPFVGQLIFFRVYSGVVESGDTLLNATKDKKERLGRILQMHANERKEIKEVRAGDIAAAVGLKEATTGDTLCDPGKPIILEKMEFPEPVISQAVEPKTKADQEKMGLALNRLAQEDPSFRVQTDEESGQTIISGMGELHLEIIVDRMRREFGVEATVGKPQVAYRETVRTVAEDVEGKFVKQSGGRGQYGHAVIKLEPNPGKGYEFLDEIKGGVIPREFIPAVNKGIEETLKSGVLAGYPVVDVKVHLTFGSYHDVDSNENAFRMAGSMAFKEAMRRAKPVLLEPMMAVEVETPEEFMGNVMGDLSSRRGIVQGMEDIAGGGGKLVRAEVPLAEMFGYSTSLRSATQGRATYTMEFKHYAETPSNVSEAVINAKQVGRG</sequence>
<dbReference type="EMBL" id="CP000086">
    <property type="protein sequence ID" value="ABC37143.1"/>
    <property type="molecule type" value="Genomic_DNA"/>
</dbReference>
<dbReference type="SMR" id="Q2T0I7"/>
<dbReference type="GeneID" id="45120515"/>
<dbReference type="KEGG" id="bte:BTH_I0756"/>
<dbReference type="HOGENOM" id="CLU_002794_4_1_4"/>
<dbReference type="Proteomes" id="UP000001930">
    <property type="component" value="Chromosome I"/>
</dbReference>
<dbReference type="GO" id="GO:0005737">
    <property type="term" value="C:cytoplasm"/>
    <property type="evidence" value="ECO:0007669"/>
    <property type="project" value="UniProtKB-SubCell"/>
</dbReference>
<dbReference type="GO" id="GO:0005525">
    <property type="term" value="F:GTP binding"/>
    <property type="evidence" value="ECO:0007669"/>
    <property type="project" value="UniProtKB-UniRule"/>
</dbReference>
<dbReference type="GO" id="GO:0003924">
    <property type="term" value="F:GTPase activity"/>
    <property type="evidence" value="ECO:0007669"/>
    <property type="project" value="InterPro"/>
</dbReference>
<dbReference type="GO" id="GO:0097216">
    <property type="term" value="F:guanosine tetraphosphate binding"/>
    <property type="evidence" value="ECO:0007669"/>
    <property type="project" value="UniProtKB-ARBA"/>
</dbReference>
<dbReference type="GO" id="GO:0003746">
    <property type="term" value="F:translation elongation factor activity"/>
    <property type="evidence" value="ECO:0007669"/>
    <property type="project" value="UniProtKB-UniRule"/>
</dbReference>
<dbReference type="GO" id="GO:0032790">
    <property type="term" value="P:ribosome disassembly"/>
    <property type="evidence" value="ECO:0007669"/>
    <property type="project" value="TreeGrafter"/>
</dbReference>
<dbReference type="CDD" id="cd01886">
    <property type="entry name" value="EF-G"/>
    <property type="match status" value="1"/>
</dbReference>
<dbReference type="CDD" id="cd16262">
    <property type="entry name" value="EFG_III"/>
    <property type="match status" value="1"/>
</dbReference>
<dbReference type="CDD" id="cd01434">
    <property type="entry name" value="EFG_mtEFG1_IV"/>
    <property type="match status" value="1"/>
</dbReference>
<dbReference type="CDD" id="cd03713">
    <property type="entry name" value="EFG_mtEFG_C"/>
    <property type="match status" value="1"/>
</dbReference>
<dbReference type="CDD" id="cd04088">
    <property type="entry name" value="EFG_mtEFG_II"/>
    <property type="match status" value="1"/>
</dbReference>
<dbReference type="FunFam" id="2.40.30.10:FF:000006">
    <property type="entry name" value="Elongation factor G"/>
    <property type="match status" value="1"/>
</dbReference>
<dbReference type="FunFam" id="3.30.230.10:FF:000003">
    <property type="entry name" value="Elongation factor G"/>
    <property type="match status" value="1"/>
</dbReference>
<dbReference type="FunFam" id="3.30.70.240:FF:000001">
    <property type="entry name" value="Elongation factor G"/>
    <property type="match status" value="1"/>
</dbReference>
<dbReference type="FunFam" id="3.30.70.870:FF:000001">
    <property type="entry name" value="Elongation factor G"/>
    <property type="match status" value="1"/>
</dbReference>
<dbReference type="FunFam" id="3.40.50.300:FF:000029">
    <property type="entry name" value="Elongation factor G"/>
    <property type="match status" value="1"/>
</dbReference>
<dbReference type="Gene3D" id="3.30.230.10">
    <property type="match status" value="1"/>
</dbReference>
<dbReference type="Gene3D" id="3.30.70.240">
    <property type="match status" value="1"/>
</dbReference>
<dbReference type="Gene3D" id="3.30.70.870">
    <property type="entry name" value="Elongation Factor G (Translational Gtpase), domain 3"/>
    <property type="match status" value="1"/>
</dbReference>
<dbReference type="Gene3D" id="3.40.50.300">
    <property type="entry name" value="P-loop containing nucleotide triphosphate hydrolases"/>
    <property type="match status" value="1"/>
</dbReference>
<dbReference type="Gene3D" id="2.40.30.10">
    <property type="entry name" value="Translation factors"/>
    <property type="match status" value="1"/>
</dbReference>
<dbReference type="HAMAP" id="MF_00054_B">
    <property type="entry name" value="EF_G_EF_2_B"/>
    <property type="match status" value="1"/>
</dbReference>
<dbReference type="InterPro" id="IPR041095">
    <property type="entry name" value="EFG_II"/>
</dbReference>
<dbReference type="InterPro" id="IPR009022">
    <property type="entry name" value="EFG_III"/>
</dbReference>
<dbReference type="InterPro" id="IPR035647">
    <property type="entry name" value="EFG_III/V"/>
</dbReference>
<dbReference type="InterPro" id="IPR047872">
    <property type="entry name" value="EFG_IV"/>
</dbReference>
<dbReference type="InterPro" id="IPR035649">
    <property type="entry name" value="EFG_V"/>
</dbReference>
<dbReference type="InterPro" id="IPR000640">
    <property type="entry name" value="EFG_V-like"/>
</dbReference>
<dbReference type="InterPro" id="IPR004161">
    <property type="entry name" value="EFTu-like_2"/>
</dbReference>
<dbReference type="InterPro" id="IPR031157">
    <property type="entry name" value="G_TR_CS"/>
</dbReference>
<dbReference type="InterPro" id="IPR027417">
    <property type="entry name" value="P-loop_NTPase"/>
</dbReference>
<dbReference type="InterPro" id="IPR020568">
    <property type="entry name" value="Ribosomal_Su5_D2-typ_SF"/>
</dbReference>
<dbReference type="InterPro" id="IPR014721">
    <property type="entry name" value="Ribsml_uS5_D2-typ_fold_subgr"/>
</dbReference>
<dbReference type="InterPro" id="IPR005225">
    <property type="entry name" value="Small_GTP-bd"/>
</dbReference>
<dbReference type="InterPro" id="IPR000795">
    <property type="entry name" value="T_Tr_GTP-bd_dom"/>
</dbReference>
<dbReference type="InterPro" id="IPR009000">
    <property type="entry name" value="Transl_B-barrel_sf"/>
</dbReference>
<dbReference type="InterPro" id="IPR004540">
    <property type="entry name" value="Transl_elong_EFG/EF2"/>
</dbReference>
<dbReference type="InterPro" id="IPR005517">
    <property type="entry name" value="Transl_elong_EFG/EF2_IV"/>
</dbReference>
<dbReference type="NCBIfam" id="TIGR00484">
    <property type="entry name" value="EF-G"/>
    <property type="match status" value="1"/>
</dbReference>
<dbReference type="NCBIfam" id="NF009381">
    <property type="entry name" value="PRK12740.1-5"/>
    <property type="match status" value="1"/>
</dbReference>
<dbReference type="NCBIfam" id="TIGR00231">
    <property type="entry name" value="small_GTP"/>
    <property type="match status" value="1"/>
</dbReference>
<dbReference type="PANTHER" id="PTHR43261:SF1">
    <property type="entry name" value="RIBOSOME-RELEASING FACTOR 2, MITOCHONDRIAL"/>
    <property type="match status" value="1"/>
</dbReference>
<dbReference type="PANTHER" id="PTHR43261">
    <property type="entry name" value="TRANSLATION ELONGATION FACTOR G-RELATED"/>
    <property type="match status" value="1"/>
</dbReference>
<dbReference type="Pfam" id="PF00679">
    <property type="entry name" value="EFG_C"/>
    <property type="match status" value="1"/>
</dbReference>
<dbReference type="Pfam" id="PF14492">
    <property type="entry name" value="EFG_III"/>
    <property type="match status" value="1"/>
</dbReference>
<dbReference type="Pfam" id="PF03764">
    <property type="entry name" value="EFG_IV"/>
    <property type="match status" value="1"/>
</dbReference>
<dbReference type="Pfam" id="PF00009">
    <property type="entry name" value="GTP_EFTU"/>
    <property type="match status" value="1"/>
</dbReference>
<dbReference type="Pfam" id="PF03144">
    <property type="entry name" value="GTP_EFTU_D2"/>
    <property type="match status" value="1"/>
</dbReference>
<dbReference type="PRINTS" id="PR00315">
    <property type="entry name" value="ELONGATNFCT"/>
</dbReference>
<dbReference type="SMART" id="SM00838">
    <property type="entry name" value="EFG_C"/>
    <property type="match status" value="1"/>
</dbReference>
<dbReference type="SMART" id="SM00889">
    <property type="entry name" value="EFG_IV"/>
    <property type="match status" value="1"/>
</dbReference>
<dbReference type="SUPFAM" id="SSF54980">
    <property type="entry name" value="EF-G C-terminal domain-like"/>
    <property type="match status" value="2"/>
</dbReference>
<dbReference type="SUPFAM" id="SSF52540">
    <property type="entry name" value="P-loop containing nucleoside triphosphate hydrolases"/>
    <property type="match status" value="1"/>
</dbReference>
<dbReference type="SUPFAM" id="SSF54211">
    <property type="entry name" value="Ribosomal protein S5 domain 2-like"/>
    <property type="match status" value="1"/>
</dbReference>
<dbReference type="SUPFAM" id="SSF50447">
    <property type="entry name" value="Translation proteins"/>
    <property type="match status" value="1"/>
</dbReference>
<dbReference type="PROSITE" id="PS00301">
    <property type="entry name" value="G_TR_1"/>
    <property type="match status" value="1"/>
</dbReference>
<dbReference type="PROSITE" id="PS51722">
    <property type="entry name" value="G_TR_2"/>
    <property type="match status" value="1"/>
</dbReference>
<accession>Q2T0I7</accession>
<name>EFG1_BURTA</name>
<proteinExistence type="inferred from homology"/>
<protein>
    <recommendedName>
        <fullName evidence="1">Elongation factor G 1</fullName>
        <shortName evidence="1">EF-G 1</shortName>
    </recommendedName>
</protein>
<keyword id="KW-0963">Cytoplasm</keyword>
<keyword id="KW-0251">Elongation factor</keyword>
<keyword id="KW-0342">GTP-binding</keyword>
<keyword id="KW-0547">Nucleotide-binding</keyword>
<keyword id="KW-0648">Protein biosynthesis</keyword>
<comment type="function">
    <text evidence="1">Catalyzes the GTP-dependent ribosomal translocation step during translation elongation. During this step, the ribosome changes from the pre-translocational (PRE) to the post-translocational (POST) state as the newly formed A-site-bound peptidyl-tRNA and P-site-bound deacylated tRNA move to the P and E sites, respectively. Catalyzes the coordinated movement of the two tRNA molecules, the mRNA and conformational changes in the ribosome.</text>
</comment>
<comment type="subcellular location">
    <subcellularLocation>
        <location evidence="1">Cytoplasm</location>
    </subcellularLocation>
</comment>
<comment type="similarity">
    <text evidence="1">Belongs to the TRAFAC class translation factor GTPase superfamily. Classic translation factor GTPase family. EF-G/EF-2 subfamily.</text>
</comment>
<evidence type="ECO:0000255" key="1">
    <source>
        <dbReference type="HAMAP-Rule" id="MF_00054"/>
    </source>
</evidence>
<gene>
    <name evidence="1" type="primary">fusA1</name>
    <name type="ordered locus">BTH_I0756</name>
</gene>
<feature type="chain" id="PRO_0000263435" description="Elongation factor G 1">
    <location>
        <begin position="1"/>
        <end position="704"/>
    </location>
</feature>
<feature type="domain" description="tr-type G">
    <location>
        <begin position="8"/>
        <end position="291"/>
    </location>
</feature>
<feature type="binding site" evidence="1">
    <location>
        <begin position="17"/>
        <end position="24"/>
    </location>
    <ligand>
        <name>GTP</name>
        <dbReference type="ChEBI" id="CHEBI:37565"/>
    </ligand>
</feature>
<feature type="binding site" evidence="1">
    <location>
        <begin position="88"/>
        <end position="92"/>
    </location>
    <ligand>
        <name>GTP</name>
        <dbReference type="ChEBI" id="CHEBI:37565"/>
    </ligand>
</feature>
<feature type="binding site" evidence="1">
    <location>
        <begin position="142"/>
        <end position="145"/>
    </location>
    <ligand>
        <name>GTP</name>
        <dbReference type="ChEBI" id="CHEBI:37565"/>
    </ligand>
</feature>